<feature type="chain" id="PRO_1000194447" description="Ribonuclease HII">
    <location>
        <begin position="1"/>
        <end position="255"/>
    </location>
</feature>
<feature type="domain" description="RNase H type-2" evidence="2">
    <location>
        <begin position="72"/>
        <end position="255"/>
    </location>
</feature>
<feature type="binding site" evidence="1">
    <location>
        <position position="78"/>
    </location>
    <ligand>
        <name>a divalent metal cation</name>
        <dbReference type="ChEBI" id="CHEBI:60240"/>
    </ligand>
</feature>
<feature type="binding site" evidence="1">
    <location>
        <position position="79"/>
    </location>
    <ligand>
        <name>a divalent metal cation</name>
        <dbReference type="ChEBI" id="CHEBI:60240"/>
    </ligand>
</feature>
<feature type="binding site" evidence="1">
    <location>
        <position position="170"/>
    </location>
    <ligand>
        <name>a divalent metal cation</name>
        <dbReference type="ChEBI" id="CHEBI:60240"/>
    </ligand>
</feature>
<proteinExistence type="inferred from homology"/>
<organism>
    <name type="scientific">Ruminiclostridium cellulolyticum (strain ATCC 35319 / DSM 5812 / JCM 6584 / H10)</name>
    <name type="common">Clostridium cellulolyticum</name>
    <dbReference type="NCBI Taxonomy" id="394503"/>
    <lineage>
        <taxon>Bacteria</taxon>
        <taxon>Bacillati</taxon>
        <taxon>Bacillota</taxon>
        <taxon>Clostridia</taxon>
        <taxon>Eubacteriales</taxon>
        <taxon>Oscillospiraceae</taxon>
        <taxon>Ruminiclostridium</taxon>
    </lineage>
</organism>
<keyword id="KW-0963">Cytoplasm</keyword>
<keyword id="KW-0255">Endonuclease</keyword>
<keyword id="KW-0378">Hydrolase</keyword>
<keyword id="KW-0464">Manganese</keyword>
<keyword id="KW-0479">Metal-binding</keyword>
<keyword id="KW-0540">Nuclease</keyword>
<keyword id="KW-1185">Reference proteome</keyword>
<gene>
    <name evidence="1" type="primary">rnhB</name>
    <name type="ordered locus">Ccel_0717</name>
</gene>
<sequence length="255" mass="28407">MGTLTLKQIQEEAQKLSIQEAIEYLSTLHSTGFKVDKLLEKYYRLKNKHDREMERLQKMLSFERQAISEGFNYIAGVDEAGRGPLAGPVVAAAVVLPNGLTIEGINDSKKLSESQREKLFSEIKEKALSYGISVIDEKYIDEVNILNATKRAMTEALSQLEPTADCILLDAVRLDNISTKQVPIIKGDSLSLSIAAASILAKVTRDRLLTEYDAKYPQYGFAAHKGYGTPQHISAIKKFGLCPIHRLSFVKNFVE</sequence>
<dbReference type="EC" id="3.1.26.4" evidence="1"/>
<dbReference type="EMBL" id="CP001348">
    <property type="protein sequence ID" value="ACL75096.1"/>
    <property type="molecule type" value="Genomic_DNA"/>
</dbReference>
<dbReference type="RefSeq" id="WP_015924263.1">
    <property type="nucleotide sequence ID" value="NC_011898.1"/>
</dbReference>
<dbReference type="SMR" id="B8I7T9"/>
<dbReference type="STRING" id="394503.Ccel_0717"/>
<dbReference type="KEGG" id="cce:Ccel_0717"/>
<dbReference type="eggNOG" id="COG0164">
    <property type="taxonomic scope" value="Bacteria"/>
</dbReference>
<dbReference type="HOGENOM" id="CLU_036532_2_1_9"/>
<dbReference type="OrthoDB" id="9803420at2"/>
<dbReference type="Proteomes" id="UP000001349">
    <property type="component" value="Chromosome"/>
</dbReference>
<dbReference type="GO" id="GO:0005737">
    <property type="term" value="C:cytoplasm"/>
    <property type="evidence" value="ECO:0007669"/>
    <property type="project" value="UniProtKB-SubCell"/>
</dbReference>
<dbReference type="GO" id="GO:0032299">
    <property type="term" value="C:ribonuclease H2 complex"/>
    <property type="evidence" value="ECO:0007669"/>
    <property type="project" value="TreeGrafter"/>
</dbReference>
<dbReference type="GO" id="GO:0030145">
    <property type="term" value="F:manganese ion binding"/>
    <property type="evidence" value="ECO:0007669"/>
    <property type="project" value="UniProtKB-UniRule"/>
</dbReference>
<dbReference type="GO" id="GO:0003723">
    <property type="term" value="F:RNA binding"/>
    <property type="evidence" value="ECO:0007669"/>
    <property type="project" value="InterPro"/>
</dbReference>
<dbReference type="GO" id="GO:0004523">
    <property type="term" value="F:RNA-DNA hybrid ribonuclease activity"/>
    <property type="evidence" value="ECO:0007669"/>
    <property type="project" value="UniProtKB-UniRule"/>
</dbReference>
<dbReference type="GO" id="GO:0043137">
    <property type="term" value="P:DNA replication, removal of RNA primer"/>
    <property type="evidence" value="ECO:0007669"/>
    <property type="project" value="TreeGrafter"/>
</dbReference>
<dbReference type="GO" id="GO:0006298">
    <property type="term" value="P:mismatch repair"/>
    <property type="evidence" value="ECO:0007669"/>
    <property type="project" value="TreeGrafter"/>
</dbReference>
<dbReference type="CDD" id="cd07182">
    <property type="entry name" value="RNase_HII_bacteria_HII_like"/>
    <property type="match status" value="1"/>
</dbReference>
<dbReference type="FunFam" id="3.30.420.10:FF:000006">
    <property type="entry name" value="Ribonuclease HII"/>
    <property type="match status" value="1"/>
</dbReference>
<dbReference type="Gene3D" id="3.30.420.10">
    <property type="entry name" value="Ribonuclease H-like superfamily/Ribonuclease H"/>
    <property type="match status" value="1"/>
</dbReference>
<dbReference type="HAMAP" id="MF_00052_B">
    <property type="entry name" value="RNase_HII_B"/>
    <property type="match status" value="1"/>
</dbReference>
<dbReference type="InterPro" id="IPR022898">
    <property type="entry name" value="RNase_HII"/>
</dbReference>
<dbReference type="InterPro" id="IPR001352">
    <property type="entry name" value="RNase_HII/HIII"/>
</dbReference>
<dbReference type="InterPro" id="IPR024567">
    <property type="entry name" value="RNase_HII/HIII_dom"/>
</dbReference>
<dbReference type="InterPro" id="IPR012337">
    <property type="entry name" value="RNaseH-like_sf"/>
</dbReference>
<dbReference type="InterPro" id="IPR036397">
    <property type="entry name" value="RNaseH_sf"/>
</dbReference>
<dbReference type="NCBIfam" id="NF000594">
    <property type="entry name" value="PRK00015.1-1"/>
    <property type="match status" value="1"/>
</dbReference>
<dbReference type="NCBIfam" id="NF000595">
    <property type="entry name" value="PRK00015.1-3"/>
    <property type="match status" value="1"/>
</dbReference>
<dbReference type="PANTHER" id="PTHR10954">
    <property type="entry name" value="RIBONUCLEASE H2 SUBUNIT A"/>
    <property type="match status" value="1"/>
</dbReference>
<dbReference type="PANTHER" id="PTHR10954:SF18">
    <property type="entry name" value="RIBONUCLEASE HII"/>
    <property type="match status" value="1"/>
</dbReference>
<dbReference type="Pfam" id="PF01351">
    <property type="entry name" value="RNase_HII"/>
    <property type="match status" value="1"/>
</dbReference>
<dbReference type="SUPFAM" id="SSF53098">
    <property type="entry name" value="Ribonuclease H-like"/>
    <property type="match status" value="1"/>
</dbReference>
<dbReference type="PROSITE" id="PS51975">
    <property type="entry name" value="RNASE_H_2"/>
    <property type="match status" value="1"/>
</dbReference>
<protein>
    <recommendedName>
        <fullName evidence="1">Ribonuclease HII</fullName>
        <shortName evidence="1">RNase HII</shortName>
        <ecNumber evidence="1">3.1.26.4</ecNumber>
    </recommendedName>
</protein>
<reference key="1">
    <citation type="submission" date="2009-01" db="EMBL/GenBank/DDBJ databases">
        <title>Complete sequence of Clostridium cellulolyticum H10.</title>
        <authorList>
            <consortium name="US DOE Joint Genome Institute"/>
            <person name="Lucas S."/>
            <person name="Copeland A."/>
            <person name="Lapidus A."/>
            <person name="Glavina del Rio T."/>
            <person name="Dalin E."/>
            <person name="Tice H."/>
            <person name="Bruce D."/>
            <person name="Goodwin L."/>
            <person name="Pitluck S."/>
            <person name="Chertkov O."/>
            <person name="Saunders E."/>
            <person name="Brettin T."/>
            <person name="Detter J.C."/>
            <person name="Han C."/>
            <person name="Larimer F."/>
            <person name="Land M."/>
            <person name="Hauser L."/>
            <person name="Kyrpides N."/>
            <person name="Ivanova N."/>
            <person name="Zhou J."/>
            <person name="Richardson P."/>
        </authorList>
    </citation>
    <scope>NUCLEOTIDE SEQUENCE [LARGE SCALE GENOMIC DNA]</scope>
    <source>
        <strain>ATCC 35319 / DSM 5812 / JCM 6584 / H10</strain>
    </source>
</reference>
<evidence type="ECO:0000255" key="1">
    <source>
        <dbReference type="HAMAP-Rule" id="MF_00052"/>
    </source>
</evidence>
<evidence type="ECO:0000255" key="2">
    <source>
        <dbReference type="PROSITE-ProRule" id="PRU01319"/>
    </source>
</evidence>
<accession>B8I7T9</accession>
<name>RNH2_RUMCH</name>
<comment type="function">
    <text evidence="1">Endonuclease that specifically degrades the RNA of RNA-DNA hybrids.</text>
</comment>
<comment type="catalytic activity">
    <reaction evidence="1">
        <text>Endonucleolytic cleavage to 5'-phosphomonoester.</text>
        <dbReference type="EC" id="3.1.26.4"/>
    </reaction>
</comment>
<comment type="cofactor">
    <cofactor evidence="1">
        <name>Mn(2+)</name>
        <dbReference type="ChEBI" id="CHEBI:29035"/>
    </cofactor>
    <cofactor evidence="1">
        <name>Mg(2+)</name>
        <dbReference type="ChEBI" id="CHEBI:18420"/>
    </cofactor>
    <text evidence="1">Manganese or magnesium. Binds 1 divalent metal ion per monomer in the absence of substrate. May bind a second metal ion after substrate binding.</text>
</comment>
<comment type="subcellular location">
    <subcellularLocation>
        <location evidence="1">Cytoplasm</location>
    </subcellularLocation>
</comment>
<comment type="similarity">
    <text evidence="1">Belongs to the RNase HII family.</text>
</comment>